<reference key="1">
    <citation type="submission" date="2007-02" db="EMBL/GenBank/DDBJ databases">
        <title>Complete sequence of Pyrobaculum calidifontis JCM 11548.</title>
        <authorList>
            <consortium name="US DOE Joint Genome Institute"/>
            <person name="Copeland A."/>
            <person name="Lucas S."/>
            <person name="Lapidus A."/>
            <person name="Barry K."/>
            <person name="Glavina del Rio T."/>
            <person name="Dalin E."/>
            <person name="Tice H."/>
            <person name="Pitluck S."/>
            <person name="Chain P."/>
            <person name="Malfatti S."/>
            <person name="Shin M."/>
            <person name="Vergez L."/>
            <person name="Schmutz J."/>
            <person name="Larimer F."/>
            <person name="Land M."/>
            <person name="Hauser L."/>
            <person name="Kyrpides N."/>
            <person name="Mikhailova N."/>
            <person name="Cozen A.E."/>
            <person name="Fitz-Gibbon S.T."/>
            <person name="House C.H."/>
            <person name="Saltikov C."/>
            <person name="Lowe T.M."/>
            <person name="Richardson P."/>
        </authorList>
    </citation>
    <scope>NUCLEOTIDE SEQUENCE [LARGE SCALE GENOMIC DNA]</scope>
    <source>
        <strain>DSM 21063 / JCM 11548 / VA1</strain>
    </source>
</reference>
<name>SECG_PYRCJ</name>
<gene>
    <name evidence="1" type="primary">secG</name>
    <name type="ordered locus">Pcal_0342</name>
</gene>
<evidence type="ECO:0000255" key="1">
    <source>
        <dbReference type="HAMAP-Rule" id="MF_00751"/>
    </source>
</evidence>
<feature type="chain" id="PRO_1000046581" description="Preprotein translocase subunit SecG">
    <location>
        <begin position="1"/>
        <end position="58"/>
    </location>
</feature>
<feature type="topological domain" description="Cytoplasmic" evidence="1">
    <location>
        <begin position="1"/>
        <end position="33"/>
    </location>
</feature>
<feature type="transmembrane region" description="Helical" evidence="1">
    <location>
        <begin position="34"/>
        <end position="55"/>
    </location>
</feature>
<feature type="topological domain" description="Extracellular" evidence="1">
    <location>
        <begin position="56"/>
        <end position="58"/>
    </location>
</feature>
<accession>A3MT10</accession>
<comment type="function">
    <text evidence="1">Involved in protein export. The function of the beta subunit is unknown, but it may be involved in stabilization of the trimeric complex.</text>
</comment>
<comment type="subunit">
    <text evidence="1">Component of the protein translocase complex. Heterotrimer consisting of alpha (SecY), beta (SecG) and gamma (SecE) subunits. Can form oligomers of the heterotrimer.</text>
</comment>
<comment type="subcellular location">
    <subcellularLocation>
        <location evidence="1">Cell membrane</location>
        <topology evidence="1">Single-pass membrane protein</topology>
    </subcellularLocation>
</comment>
<comment type="similarity">
    <text evidence="1">Belongs to the SEC61-beta family.</text>
</comment>
<keyword id="KW-1003">Cell membrane</keyword>
<keyword id="KW-0472">Membrane</keyword>
<keyword id="KW-0653">Protein transport</keyword>
<keyword id="KW-0811">Translocation</keyword>
<keyword id="KW-0812">Transmembrane</keyword>
<keyword id="KW-1133">Transmembrane helix</keyword>
<keyword id="KW-0813">Transport</keyword>
<proteinExistence type="inferred from homology"/>
<organism>
    <name type="scientific">Pyrobaculum calidifontis (strain DSM 21063 / JCM 11548 / VA1)</name>
    <dbReference type="NCBI Taxonomy" id="410359"/>
    <lineage>
        <taxon>Archaea</taxon>
        <taxon>Thermoproteota</taxon>
        <taxon>Thermoprotei</taxon>
        <taxon>Thermoproteales</taxon>
        <taxon>Thermoproteaceae</taxon>
        <taxon>Pyrobaculum</taxon>
    </lineage>
</organism>
<sequence>MARRRKYEGLNPFVAAGLIKFSEEGELEKIKLSPKAAIAISLAIIAAILALNLLLPPP</sequence>
<protein>
    <recommendedName>
        <fullName evidence="1">Preprotein translocase subunit SecG</fullName>
    </recommendedName>
    <alternativeName>
        <fullName evidence="1">Protein transport protein Sec61 subunit beta homolog</fullName>
    </alternativeName>
</protein>
<dbReference type="EMBL" id="CP000561">
    <property type="protein sequence ID" value="ABO07777.1"/>
    <property type="molecule type" value="Genomic_DNA"/>
</dbReference>
<dbReference type="RefSeq" id="WP_011849034.1">
    <property type="nucleotide sequence ID" value="NC_009073.1"/>
</dbReference>
<dbReference type="SMR" id="A3MT10"/>
<dbReference type="GeneID" id="4909898"/>
<dbReference type="KEGG" id="pcl:Pcal_0342"/>
<dbReference type="eggNOG" id="arCOG02957">
    <property type="taxonomic scope" value="Archaea"/>
</dbReference>
<dbReference type="HOGENOM" id="CLU_208205_2_1_2"/>
<dbReference type="OrthoDB" id="28749at2157"/>
<dbReference type="Proteomes" id="UP000001431">
    <property type="component" value="Chromosome"/>
</dbReference>
<dbReference type="GO" id="GO:0005886">
    <property type="term" value="C:plasma membrane"/>
    <property type="evidence" value="ECO:0007669"/>
    <property type="project" value="UniProtKB-SubCell"/>
</dbReference>
<dbReference type="GO" id="GO:0015031">
    <property type="term" value="P:protein transport"/>
    <property type="evidence" value="ECO:0007669"/>
    <property type="project" value="UniProtKB-UniRule"/>
</dbReference>
<dbReference type="HAMAP" id="MF_00751">
    <property type="entry name" value="SecG"/>
    <property type="match status" value="1"/>
</dbReference>
<dbReference type="InterPro" id="IPR023531">
    <property type="entry name" value="Preprot_translocase_SecG"/>
</dbReference>
<dbReference type="InterPro" id="IPR016482">
    <property type="entry name" value="SecG/Sec61-beta/Sbh"/>
</dbReference>
<dbReference type="NCBIfam" id="NF002318">
    <property type="entry name" value="PRK01253.1"/>
    <property type="match status" value="1"/>
</dbReference>
<dbReference type="Pfam" id="PF03911">
    <property type="entry name" value="Sec61_beta"/>
    <property type="match status" value="1"/>
</dbReference>